<accession>A4YTC4</accession>
<dbReference type="EC" id="6.1.1.23" evidence="1"/>
<dbReference type="EMBL" id="CU234118">
    <property type="protein sequence ID" value="CAL77150.1"/>
    <property type="molecule type" value="Genomic_DNA"/>
</dbReference>
<dbReference type="RefSeq" id="WP_011926305.1">
    <property type="nucleotide sequence ID" value="NC_009445.1"/>
</dbReference>
<dbReference type="SMR" id="A4YTC4"/>
<dbReference type="STRING" id="114615.BRADO3359"/>
<dbReference type="KEGG" id="bra:BRADO3359"/>
<dbReference type="eggNOG" id="COG0173">
    <property type="taxonomic scope" value="Bacteria"/>
</dbReference>
<dbReference type="HOGENOM" id="CLU_014330_3_2_5"/>
<dbReference type="OrthoDB" id="9802326at2"/>
<dbReference type="Proteomes" id="UP000001994">
    <property type="component" value="Chromosome"/>
</dbReference>
<dbReference type="GO" id="GO:0005737">
    <property type="term" value="C:cytoplasm"/>
    <property type="evidence" value="ECO:0007669"/>
    <property type="project" value="UniProtKB-SubCell"/>
</dbReference>
<dbReference type="GO" id="GO:0004815">
    <property type="term" value="F:aspartate-tRNA ligase activity"/>
    <property type="evidence" value="ECO:0007669"/>
    <property type="project" value="UniProtKB-UniRule"/>
</dbReference>
<dbReference type="GO" id="GO:0050560">
    <property type="term" value="F:aspartate-tRNA(Asn) ligase activity"/>
    <property type="evidence" value="ECO:0007669"/>
    <property type="project" value="UniProtKB-EC"/>
</dbReference>
<dbReference type="GO" id="GO:0005524">
    <property type="term" value="F:ATP binding"/>
    <property type="evidence" value="ECO:0007669"/>
    <property type="project" value="UniProtKB-UniRule"/>
</dbReference>
<dbReference type="GO" id="GO:0003676">
    <property type="term" value="F:nucleic acid binding"/>
    <property type="evidence" value="ECO:0007669"/>
    <property type="project" value="InterPro"/>
</dbReference>
<dbReference type="GO" id="GO:0006422">
    <property type="term" value="P:aspartyl-tRNA aminoacylation"/>
    <property type="evidence" value="ECO:0007669"/>
    <property type="project" value="UniProtKB-UniRule"/>
</dbReference>
<dbReference type="CDD" id="cd00777">
    <property type="entry name" value="AspRS_core"/>
    <property type="match status" value="1"/>
</dbReference>
<dbReference type="CDD" id="cd04317">
    <property type="entry name" value="EcAspRS_like_N"/>
    <property type="match status" value="1"/>
</dbReference>
<dbReference type="Gene3D" id="3.30.930.10">
    <property type="entry name" value="Bira Bifunctional Protein, Domain 2"/>
    <property type="match status" value="1"/>
</dbReference>
<dbReference type="Gene3D" id="3.30.1360.30">
    <property type="entry name" value="GAD-like domain"/>
    <property type="match status" value="1"/>
</dbReference>
<dbReference type="Gene3D" id="2.40.50.140">
    <property type="entry name" value="Nucleic acid-binding proteins"/>
    <property type="match status" value="1"/>
</dbReference>
<dbReference type="HAMAP" id="MF_00044">
    <property type="entry name" value="Asp_tRNA_synth_type1"/>
    <property type="match status" value="1"/>
</dbReference>
<dbReference type="InterPro" id="IPR004364">
    <property type="entry name" value="Aa-tRNA-synt_II"/>
</dbReference>
<dbReference type="InterPro" id="IPR006195">
    <property type="entry name" value="aa-tRNA-synth_II"/>
</dbReference>
<dbReference type="InterPro" id="IPR045864">
    <property type="entry name" value="aa-tRNA-synth_II/BPL/LPL"/>
</dbReference>
<dbReference type="InterPro" id="IPR004524">
    <property type="entry name" value="Asp-tRNA-ligase_1"/>
</dbReference>
<dbReference type="InterPro" id="IPR047089">
    <property type="entry name" value="Asp-tRNA-ligase_1_N"/>
</dbReference>
<dbReference type="InterPro" id="IPR002312">
    <property type="entry name" value="Asp/Asn-tRNA-synth_IIb"/>
</dbReference>
<dbReference type="InterPro" id="IPR047090">
    <property type="entry name" value="AspRS_core"/>
</dbReference>
<dbReference type="InterPro" id="IPR004115">
    <property type="entry name" value="GAD-like_sf"/>
</dbReference>
<dbReference type="InterPro" id="IPR029351">
    <property type="entry name" value="GAD_dom"/>
</dbReference>
<dbReference type="InterPro" id="IPR012340">
    <property type="entry name" value="NA-bd_OB-fold"/>
</dbReference>
<dbReference type="InterPro" id="IPR004365">
    <property type="entry name" value="NA-bd_OB_tRNA"/>
</dbReference>
<dbReference type="NCBIfam" id="TIGR00459">
    <property type="entry name" value="aspS_bact"/>
    <property type="match status" value="1"/>
</dbReference>
<dbReference type="NCBIfam" id="NF001750">
    <property type="entry name" value="PRK00476.1"/>
    <property type="match status" value="1"/>
</dbReference>
<dbReference type="PANTHER" id="PTHR22594:SF5">
    <property type="entry name" value="ASPARTATE--TRNA LIGASE, MITOCHONDRIAL"/>
    <property type="match status" value="1"/>
</dbReference>
<dbReference type="PANTHER" id="PTHR22594">
    <property type="entry name" value="ASPARTYL/LYSYL-TRNA SYNTHETASE"/>
    <property type="match status" value="1"/>
</dbReference>
<dbReference type="Pfam" id="PF02938">
    <property type="entry name" value="GAD"/>
    <property type="match status" value="1"/>
</dbReference>
<dbReference type="Pfam" id="PF00152">
    <property type="entry name" value="tRNA-synt_2"/>
    <property type="match status" value="1"/>
</dbReference>
<dbReference type="Pfam" id="PF01336">
    <property type="entry name" value="tRNA_anti-codon"/>
    <property type="match status" value="1"/>
</dbReference>
<dbReference type="PRINTS" id="PR01042">
    <property type="entry name" value="TRNASYNTHASP"/>
</dbReference>
<dbReference type="SUPFAM" id="SSF55681">
    <property type="entry name" value="Class II aaRS and biotin synthetases"/>
    <property type="match status" value="1"/>
</dbReference>
<dbReference type="SUPFAM" id="SSF55261">
    <property type="entry name" value="GAD domain-like"/>
    <property type="match status" value="1"/>
</dbReference>
<dbReference type="SUPFAM" id="SSF50249">
    <property type="entry name" value="Nucleic acid-binding proteins"/>
    <property type="match status" value="1"/>
</dbReference>
<dbReference type="PROSITE" id="PS50862">
    <property type="entry name" value="AA_TRNA_LIGASE_II"/>
    <property type="match status" value="1"/>
</dbReference>
<reference key="1">
    <citation type="journal article" date="2007" name="Science">
        <title>Legumes symbioses: absence of nod genes in photosynthetic bradyrhizobia.</title>
        <authorList>
            <person name="Giraud E."/>
            <person name="Moulin L."/>
            <person name="Vallenet D."/>
            <person name="Barbe V."/>
            <person name="Cytryn E."/>
            <person name="Avarre J.-C."/>
            <person name="Jaubert M."/>
            <person name="Simon D."/>
            <person name="Cartieaux F."/>
            <person name="Prin Y."/>
            <person name="Bena G."/>
            <person name="Hannibal L."/>
            <person name="Fardoux J."/>
            <person name="Kojadinovic M."/>
            <person name="Vuillet L."/>
            <person name="Lajus A."/>
            <person name="Cruveiller S."/>
            <person name="Rouy Z."/>
            <person name="Mangenot S."/>
            <person name="Segurens B."/>
            <person name="Dossat C."/>
            <person name="Franck W.L."/>
            <person name="Chang W.-S."/>
            <person name="Saunders E."/>
            <person name="Bruce D."/>
            <person name="Richardson P."/>
            <person name="Normand P."/>
            <person name="Dreyfus B."/>
            <person name="Pignol D."/>
            <person name="Stacey G."/>
            <person name="Emerich D."/>
            <person name="Vermeglio A."/>
            <person name="Medigue C."/>
            <person name="Sadowsky M."/>
        </authorList>
    </citation>
    <scope>NUCLEOTIDE SEQUENCE [LARGE SCALE GENOMIC DNA]</scope>
    <source>
        <strain>ORS 278</strain>
    </source>
</reference>
<sequence length="590" mass="66536">MHRYRTHTCGALRDSNIGETVRLSGWCHRIRDHGGVLFVDLRDHYGITQCVVDPDSKAFGLAEKLRSEWVVRMEGKVRHRPEGTENPELPTGQVELYVADIEVLGPAAELPLPVFGEQDYPEDIRLKYRFLDLRRDRLHQNIMTRGAIIDSMRRRMKEQGFFEFQTPILTASSPEGARDFLVPSRIHPGKFYALPQAPQQYKQLLMMSGFDRYFQIAPCFRDEDPRADRLPGEFYQLDVEMSFVEQEDVFAAMEPVITGVFEDFAKGKPVTKGWPRIPFAEALRKYGTDKPDLRNPLEMQDVSEHFRGSGFKVFARMLEDPKNQVWAIPAPGGGSRAFCDRMNSWAQGEGQPGLGYIMWREGGEGAGPLANNIGPERTAAIRSQLGTKEGDAAFFVAGDPDKFWKFAGLARTKVGEELNLIDKDRFALAWIVDFPMYEYNEDDKKVDFSHNPFSMPQGGLEALTTKDPLTIKAFQYDIACNGYEIASGGIRNHKPEAMVKAFEIAGYGEQEVVDRFGGMYRAFQYGAPPHGGMAAGVDRIVMLLCGTTNLREISLFPMNQQAMDLLMGAPSEATTKQLRELHIKPNLPNK</sequence>
<organism>
    <name type="scientific">Bradyrhizobium sp. (strain ORS 278)</name>
    <dbReference type="NCBI Taxonomy" id="114615"/>
    <lineage>
        <taxon>Bacteria</taxon>
        <taxon>Pseudomonadati</taxon>
        <taxon>Pseudomonadota</taxon>
        <taxon>Alphaproteobacteria</taxon>
        <taxon>Hyphomicrobiales</taxon>
        <taxon>Nitrobacteraceae</taxon>
        <taxon>Bradyrhizobium</taxon>
    </lineage>
</organism>
<name>SYDND_BRASO</name>
<proteinExistence type="inferred from homology"/>
<keyword id="KW-0030">Aminoacyl-tRNA synthetase</keyword>
<keyword id="KW-0067">ATP-binding</keyword>
<keyword id="KW-0963">Cytoplasm</keyword>
<keyword id="KW-0436">Ligase</keyword>
<keyword id="KW-0547">Nucleotide-binding</keyword>
<keyword id="KW-0648">Protein biosynthesis</keyword>
<keyword id="KW-1185">Reference proteome</keyword>
<protein>
    <recommendedName>
        <fullName evidence="1">Aspartate--tRNA(Asp/Asn) ligase</fullName>
        <ecNumber evidence="1">6.1.1.23</ecNumber>
    </recommendedName>
    <alternativeName>
        <fullName evidence="1">Aspartyl-tRNA synthetase</fullName>
        <shortName evidence="1">AspRS</shortName>
    </alternativeName>
    <alternativeName>
        <fullName evidence="1">Non-discriminating aspartyl-tRNA synthetase</fullName>
        <shortName evidence="1">ND-AspRS</shortName>
    </alternativeName>
</protein>
<feature type="chain" id="PRO_1000006642" description="Aspartate--tRNA(Asp/Asn) ligase">
    <location>
        <begin position="1"/>
        <end position="590"/>
    </location>
</feature>
<feature type="region of interest" description="Aspartate" evidence="1">
    <location>
        <begin position="199"/>
        <end position="202"/>
    </location>
</feature>
<feature type="binding site" evidence="1">
    <location>
        <position position="175"/>
    </location>
    <ligand>
        <name>L-aspartate</name>
        <dbReference type="ChEBI" id="CHEBI:29991"/>
    </ligand>
</feature>
<feature type="binding site" evidence="1">
    <location>
        <begin position="221"/>
        <end position="223"/>
    </location>
    <ligand>
        <name>ATP</name>
        <dbReference type="ChEBI" id="CHEBI:30616"/>
    </ligand>
</feature>
<feature type="binding site" evidence="1">
    <location>
        <position position="221"/>
    </location>
    <ligand>
        <name>L-aspartate</name>
        <dbReference type="ChEBI" id="CHEBI:29991"/>
    </ligand>
</feature>
<feature type="binding site" evidence="1">
    <location>
        <position position="450"/>
    </location>
    <ligand>
        <name>L-aspartate</name>
        <dbReference type="ChEBI" id="CHEBI:29991"/>
    </ligand>
</feature>
<feature type="binding site" evidence="1">
    <location>
        <position position="484"/>
    </location>
    <ligand>
        <name>ATP</name>
        <dbReference type="ChEBI" id="CHEBI:30616"/>
    </ligand>
</feature>
<feature type="binding site" evidence="1">
    <location>
        <position position="491"/>
    </location>
    <ligand>
        <name>L-aspartate</name>
        <dbReference type="ChEBI" id="CHEBI:29991"/>
    </ligand>
</feature>
<feature type="binding site" evidence="1">
    <location>
        <begin position="536"/>
        <end position="539"/>
    </location>
    <ligand>
        <name>ATP</name>
        <dbReference type="ChEBI" id="CHEBI:30616"/>
    </ligand>
</feature>
<feature type="site" description="Important for tRNA non-discrimination" evidence="1">
    <location>
        <position position="33"/>
    </location>
</feature>
<feature type="site" description="Important for tRNA non-discrimination" evidence="1">
    <location>
        <position position="83"/>
    </location>
</feature>
<comment type="function">
    <text evidence="1">Aspartyl-tRNA synthetase with relaxed tRNA specificity since it is able to aspartylate not only its cognate tRNA(Asp) but also tRNA(Asn). Reaction proceeds in two steps: L-aspartate is first activated by ATP to form Asp-AMP and then transferred to the acceptor end of tRNA(Asp/Asn).</text>
</comment>
<comment type="catalytic activity">
    <reaction evidence="1">
        <text>tRNA(Asx) + L-aspartate + ATP = L-aspartyl-tRNA(Asx) + AMP + diphosphate</text>
        <dbReference type="Rhea" id="RHEA:18349"/>
        <dbReference type="Rhea" id="RHEA-COMP:9710"/>
        <dbReference type="Rhea" id="RHEA-COMP:9711"/>
        <dbReference type="ChEBI" id="CHEBI:29991"/>
        <dbReference type="ChEBI" id="CHEBI:30616"/>
        <dbReference type="ChEBI" id="CHEBI:33019"/>
        <dbReference type="ChEBI" id="CHEBI:78442"/>
        <dbReference type="ChEBI" id="CHEBI:78516"/>
        <dbReference type="ChEBI" id="CHEBI:456215"/>
        <dbReference type="EC" id="6.1.1.23"/>
    </reaction>
</comment>
<comment type="subunit">
    <text evidence="1">Homodimer.</text>
</comment>
<comment type="subcellular location">
    <subcellularLocation>
        <location evidence="1">Cytoplasm</location>
    </subcellularLocation>
</comment>
<comment type="similarity">
    <text evidence="1">Belongs to the class-II aminoacyl-tRNA synthetase family. Type 1 subfamily.</text>
</comment>
<gene>
    <name evidence="1" type="primary">aspS</name>
    <name type="ordered locus">BRADO3359</name>
</gene>
<evidence type="ECO:0000255" key="1">
    <source>
        <dbReference type="HAMAP-Rule" id="MF_00044"/>
    </source>
</evidence>